<name>RK20_EUCGG</name>
<comment type="function">
    <text evidence="1">Binds directly to 23S ribosomal RNA and is necessary for the in vitro assembly process of the 50S ribosomal subunit. It is not involved in the protein synthesizing functions of that subunit.</text>
</comment>
<comment type="subcellular location">
    <subcellularLocation>
        <location>Plastid</location>
        <location>Chloroplast</location>
    </subcellularLocation>
</comment>
<comment type="similarity">
    <text evidence="1">Belongs to the bacterial ribosomal protein bL20 family.</text>
</comment>
<accession>Q49KX6</accession>
<gene>
    <name evidence="1" type="primary">rpl20</name>
</gene>
<keyword id="KW-0150">Chloroplast</keyword>
<keyword id="KW-0934">Plastid</keyword>
<keyword id="KW-0687">Ribonucleoprotein</keyword>
<keyword id="KW-0689">Ribosomal protein</keyword>
<keyword id="KW-0694">RNA-binding</keyword>
<keyword id="KW-0699">rRNA-binding</keyword>
<organism>
    <name type="scientific">Eucalyptus globulus subsp. globulus</name>
    <name type="common">Tasmanian blue gum</name>
    <dbReference type="NCBI Taxonomy" id="71271"/>
    <lineage>
        <taxon>Eukaryota</taxon>
        <taxon>Viridiplantae</taxon>
        <taxon>Streptophyta</taxon>
        <taxon>Embryophyta</taxon>
        <taxon>Tracheophyta</taxon>
        <taxon>Spermatophyta</taxon>
        <taxon>Magnoliopsida</taxon>
        <taxon>eudicotyledons</taxon>
        <taxon>Gunneridae</taxon>
        <taxon>Pentapetalae</taxon>
        <taxon>rosids</taxon>
        <taxon>malvids</taxon>
        <taxon>Myrtales</taxon>
        <taxon>Myrtaceae</taxon>
        <taxon>Myrtoideae</taxon>
        <taxon>Eucalypteae</taxon>
        <taxon>Eucalyptus</taxon>
    </lineage>
</organism>
<geneLocation type="chloroplast"/>
<evidence type="ECO:0000255" key="1">
    <source>
        <dbReference type="HAMAP-Rule" id="MF_00382"/>
    </source>
</evidence>
<evidence type="ECO:0000305" key="2"/>
<reference key="1">
    <citation type="journal article" date="2005" name="DNA Res.">
        <title>Complete nucleotide sequence of the chloroplast genome from the Tasmanian blue gum, Eucalyptus globulus (Myrtaceae).</title>
        <authorList>
            <person name="Steane D.A."/>
        </authorList>
    </citation>
    <scope>NUCLEOTIDE SEQUENCE [LARGE SCALE GENOMIC DNA]</scope>
</reference>
<sequence>MTRIRRGYIARRRRTKIRLFASSFRGARSRLTRTIIQQKIRSLVSSHRDRDRKKIDFRRLWITRINAVIRGNRVSYSYSRLIHNLYKRQLLLNRKILAQIAILNRNCLYMISNEIRS</sequence>
<dbReference type="EMBL" id="AY780259">
    <property type="protein sequence ID" value="AAX21051.1"/>
    <property type="molecule type" value="Genomic_DNA"/>
</dbReference>
<dbReference type="RefSeq" id="YP_636321.1">
    <property type="nucleotide sequence ID" value="NC_008115.1"/>
</dbReference>
<dbReference type="SMR" id="Q49KX6"/>
<dbReference type="GeneID" id="4108407"/>
<dbReference type="GO" id="GO:0009507">
    <property type="term" value="C:chloroplast"/>
    <property type="evidence" value="ECO:0007669"/>
    <property type="project" value="UniProtKB-SubCell"/>
</dbReference>
<dbReference type="GO" id="GO:1990904">
    <property type="term" value="C:ribonucleoprotein complex"/>
    <property type="evidence" value="ECO:0007669"/>
    <property type="project" value="UniProtKB-KW"/>
</dbReference>
<dbReference type="GO" id="GO:0005840">
    <property type="term" value="C:ribosome"/>
    <property type="evidence" value="ECO:0007669"/>
    <property type="project" value="UniProtKB-KW"/>
</dbReference>
<dbReference type="GO" id="GO:0019843">
    <property type="term" value="F:rRNA binding"/>
    <property type="evidence" value="ECO:0007669"/>
    <property type="project" value="UniProtKB-UniRule"/>
</dbReference>
<dbReference type="GO" id="GO:0003735">
    <property type="term" value="F:structural constituent of ribosome"/>
    <property type="evidence" value="ECO:0007669"/>
    <property type="project" value="InterPro"/>
</dbReference>
<dbReference type="GO" id="GO:0000027">
    <property type="term" value="P:ribosomal large subunit assembly"/>
    <property type="evidence" value="ECO:0007669"/>
    <property type="project" value="UniProtKB-UniRule"/>
</dbReference>
<dbReference type="GO" id="GO:0006412">
    <property type="term" value="P:translation"/>
    <property type="evidence" value="ECO:0007669"/>
    <property type="project" value="InterPro"/>
</dbReference>
<dbReference type="CDD" id="cd07026">
    <property type="entry name" value="Ribosomal_L20"/>
    <property type="match status" value="1"/>
</dbReference>
<dbReference type="FunFam" id="1.10.1900.20:FF:000001">
    <property type="entry name" value="50S ribosomal protein L20"/>
    <property type="match status" value="1"/>
</dbReference>
<dbReference type="Gene3D" id="6.10.160.10">
    <property type="match status" value="1"/>
</dbReference>
<dbReference type="Gene3D" id="1.10.1900.20">
    <property type="entry name" value="Ribosomal protein L20"/>
    <property type="match status" value="1"/>
</dbReference>
<dbReference type="HAMAP" id="MF_00382">
    <property type="entry name" value="Ribosomal_bL20"/>
    <property type="match status" value="1"/>
</dbReference>
<dbReference type="InterPro" id="IPR005813">
    <property type="entry name" value="Ribosomal_bL20"/>
</dbReference>
<dbReference type="InterPro" id="IPR049946">
    <property type="entry name" value="RIBOSOMAL_L20_CS"/>
</dbReference>
<dbReference type="InterPro" id="IPR035566">
    <property type="entry name" value="Ribosomal_protein_bL20_C"/>
</dbReference>
<dbReference type="NCBIfam" id="TIGR01032">
    <property type="entry name" value="rplT_bact"/>
    <property type="match status" value="1"/>
</dbReference>
<dbReference type="PANTHER" id="PTHR10986">
    <property type="entry name" value="39S RIBOSOMAL PROTEIN L20"/>
    <property type="match status" value="1"/>
</dbReference>
<dbReference type="Pfam" id="PF00453">
    <property type="entry name" value="Ribosomal_L20"/>
    <property type="match status" value="1"/>
</dbReference>
<dbReference type="PRINTS" id="PR00062">
    <property type="entry name" value="RIBOSOMALL20"/>
</dbReference>
<dbReference type="SUPFAM" id="SSF74731">
    <property type="entry name" value="Ribosomal protein L20"/>
    <property type="match status" value="1"/>
</dbReference>
<dbReference type="PROSITE" id="PS00937">
    <property type="entry name" value="RIBOSOMAL_L20"/>
    <property type="match status" value="1"/>
</dbReference>
<proteinExistence type="inferred from homology"/>
<feature type="chain" id="PRO_0000276408" description="Large ribosomal subunit protein bL20c">
    <location>
        <begin position="1"/>
        <end position="117"/>
    </location>
</feature>
<protein>
    <recommendedName>
        <fullName evidence="1">Large ribosomal subunit protein bL20c</fullName>
    </recommendedName>
    <alternativeName>
        <fullName evidence="2">50S ribosomal protein L20, chloroplastic</fullName>
    </alternativeName>
</protein>